<name>RL20_THEPX</name>
<organism>
    <name type="scientific">Thermoanaerobacter sp. (strain X514)</name>
    <dbReference type="NCBI Taxonomy" id="399726"/>
    <lineage>
        <taxon>Bacteria</taxon>
        <taxon>Bacillati</taxon>
        <taxon>Bacillota</taxon>
        <taxon>Clostridia</taxon>
        <taxon>Thermoanaerobacterales</taxon>
        <taxon>Thermoanaerobacteraceae</taxon>
        <taxon>Thermoanaerobacter</taxon>
    </lineage>
</organism>
<comment type="function">
    <text evidence="1">Binds directly to 23S ribosomal RNA and is necessary for the in vitro assembly process of the 50S ribosomal subunit. It is not involved in the protein synthesizing functions of that subunit.</text>
</comment>
<comment type="similarity">
    <text evidence="1">Belongs to the bacterial ribosomal protein bL20 family.</text>
</comment>
<sequence length="119" mass="13919">MARVKFGKVTRRRRKKILKLAKGYWGAKSKLFRVANQAVMKSLMYAYIGRKLRKRDFRRLWITRINAAARAHGISYSRFINGLKKAGIEINRKMLSEMAIHDEKAFEELVNIAKQHLNA</sequence>
<proteinExistence type="inferred from homology"/>
<reference key="1">
    <citation type="submission" date="2008-01" db="EMBL/GenBank/DDBJ databases">
        <title>Complete sequence of Thermoanaerobacter sp. X514.</title>
        <authorList>
            <consortium name="US DOE Joint Genome Institute"/>
            <person name="Copeland A."/>
            <person name="Lucas S."/>
            <person name="Lapidus A."/>
            <person name="Barry K."/>
            <person name="Glavina del Rio T."/>
            <person name="Dalin E."/>
            <person name="Tice H."/>
            <person name="Pitluck S."/>
            <person name="Bruce D."/>
            <person name="Goodwin L."/>
            <person name="Saunders E."/>
            <person name="Brettin T."/>
            <person name="Detter J.C."/>
            <person name="Han C."/>
            <person name="Schmutz J."/>
            <person name="Larimer F."/>
            <person name="Land M."/>
            <person name="Hauser L."/>
            <person name="Kyrpides N."/>
            <person name="Kim E."/>
            <person name="Hemme C."/>
            <person name="Fields M.W."/>
            <person name="He Z."/>
            <person name="Zhou J."/>
            <person name="Richardson P."/>
        </authorList>
    </citation>
    <scope>NUCLEOTIDE SEQUENCE [LARGE SCALE GENOMIC DNA]</scope>
    <source>
        <strain>X514</strain>
    </source>
</reference>
<feature type="chain" id="PRO_1000122385" description="Large ribosomal subunit protein bL20">
    <location>
        <begin position="1"/>
        <end position="119"/>
    </location>
</feature>
<gene>
    <name evidence="1" type="primary">rplT</name>
    <name type="ordered locus">Teth514_2052</name>
</gene>
<accession>B0K3L3</accession>
<dbReference type="EMBL" id="CP000923">
    <property type="protein sequence ID" value="ABY93324.1"/>
    <property type="molecule type" value="Genomic_DNA"/>
</dbReference>
<dbReference type="RefSeq" id="WP_009052579.1">
    <property type="nucleotide sequence ID" value="NC_010320.1"/>
</dbReference>
<dbReference type="SMR" id="B0K3L3"/>
<dbReference type="KEGG" id="tex:Teth514_2052"/>
<dbReference type="HOGENOM" id="CLU_123265_0_1_9"/>
<dbReference type="Proteomes" id="UP000002155">
    <property type="component" value="Chromosome"/>
</dbReference>
<dbReference type="GO" id="GO:1990904">
    <property type="term" value="C:ribonucleoprotein complex"/>
    <property type="evidence" value="ECO:0007669"/>
    <property type="project" value="UniProtKB-KW"/>
</dbReference>
<dbReference type="GO" id="GO:0005840">
    <property type="term" value="C:ribosome"/>
    <property type="evidence" value="ECO:0007669"/>
    <property type="project" value="UniProtKB-KW"/>
</dbReference>
<dbReference type="GO" id="GO:0019843">
    <property type="term" value="F:rRNA binding"/>
    <property type="evidence" value="ECO:0007669"/>
    <property type="project" value="UniProtKB-UniRule"/>
</dbReference>
<dbReference type="GO" id="GO:0003735">
    <property type="term" value="F:structural constituent of ribosome"/>
    <property type="evidence" value="ECO:0007669"/>
    <property type="project" value="InterPro"/>
</dbReference>
<dbReference type="GO" id="GO:0000027">
    <property type="term" value="P:ribosomal large subunit assembly"/>
    <property type="evidence" value="ECO:0007669"/>
    <property type="project" value="UniProtKB-UniRule"/>
</dbReference>
<dbReference type="GO" id="GO:0006412">
    <property type="term" value="P:translation"/>
    <property type="evidence" value="ECO:0007669"/>
    <property type="project" value="InterPro"/>
</dbReference>
<dbReference type="CDD" id="cd07026">
    <property type="entry name" value="Ribosomal_L20"/>
    <property type="match status" value="1"/>
</dbReference>
<dbReference type="FunFam" id="1.10.1900.20:FF:000001">
    <property type="entry name" value="50S ribosomal protein L20"/>
    <property type="match status" value="1"/>
</dbReference>
<dbReference type="Gene3D" id="6.10.160.10">
    <property type="match status" value="1"/>
</dbReference>
<dbReference type="Gene3D" id="1.10.1900.20">
    <property type="entry name" value="Ribosomal protein L20"/>
    <property type="match status" value="1"/>
</dbReference>
<dbReference type="HAMAP" id="MF_00382">
    <property type="entry name" value="Ribosomal_bL20"/>
    <property type="match status" value="1"/>
</dbReference>
<dbReference type="InterPro" id="IPR005813">
    <property type="entry name" value="Ribosomal_bL20"/>
</dbReference>
<dbReference type="InterPro" id="IPR049946">
    <property type="entry name" value="RIBOSOMAL_L20_CS"/>
</dbReference>
<dbReference type="InterPro" id="IPR035566">
    <property type="entry name" value="Ribosomal_protein_bL20_C"/>
</dbReference>
<dbReference type="NCBIfam" id="TIGR01032">
    <property type="entry name" value="rplT_bact"/>
    <property type="match status" value="1"/>
</dbReference>
<dbReference type="PANTHER" id="PTHR10986">
    <property type="entry name" value="39S RIBOSOMAL PROTEIN L20"/>
    <property type="match status" value="1"/>
</dbReference>
<dbReference type="Pfam" id="PF00453">
    <property type="entry name" value="Ribosomal_L20"/>
    <property type="match status" value="1"/>
</dbReference>
<dbReference type="PRINTS" id="PR00062">
    <property type="entry name" value="RIBOSOMALL20"/>
</dbReference>
<dbReference type="SUPFAM" id="SSF74731">
    <property type="entry name" value="Ribosomal protein L20"/>
    <property type="match status" value="1"/>
</dbReference>
<dbReference type="PROSITE" id="PS00937">
    <property type="entry name" value="RIBOSOMAL_L20"/>
    <property type="match status" value="1"/>
</dbReference>
<keyword id="KW-0687">Ribonucleoprotein</keyword>
<keyword id="KW-0689">Ribosomal protein</keyword>
<keyword id="KW-0694">RNA-binding</keyword>
<keyword id="KW-0699">rRNA-binding</keyword>
<evidence type="ECO:0000255" key="1">
    <source>
        <dbReference type="HAMAP-Rule" id="MF_00382"/>
    </source>
</evidence>
<evidence type="ECO:0000305" key="2"/>
<protein>
    <recommendedName>
        <fullName evidence="1">Large ribosomal subunit protein bL20</fullName>
    </recommendedName>
    <alternativeName>
        <fullName evidence="2">50S ribosomal protein L20</fullName>
    </alternativeName>
</protein>